<dbReference type="EMBL" id="CP001398">
    <property type="protein sequence ID" value="ACS33409.1"/>
    <property type="molecule type" value="Genomic_DNA"/>
</dbReference>
<dbReference type="RefSeq" id="WP_015858524.1">
    <property type="nucleotide sequence ID" value="NC_012804.1"/>
</dbReference>
<dbReference type="SMR" id="C5A597"/>
<dbReference type="STRING" id="593117.TGAM_0907"/>
<dbReference type="PaxDb" id="593117-TGAM_0907"/>
<dbReference type="GeneID" id="7986864"/>
<dbReference type="KEGG" id="tga:TGAM_0907"/>
<dbReference type="PATRIC" id="fig|593117.10.peg.900"/>
<dbReference type="eggNOG" id="arCOG04129">
    <property type="taxonomic scope" value="Archaea"/>
</dbReference>
<dbReference type="HOGENOM" id="CLU_103610_1_1_2"/>
<dbReference type="OrthoDB" id="6295at2157"/>
<dbReference type="Proteomes" id="UP000001488">
    <property type="component" value="Chromosome"/>
</dbReference>
<dbReference type="GO" id="GO:1990904">
    <property type="term" value="C:ribonucleoprotein complex"/>
    <property type="evidence" value="ECO:0007669"/>
    <property type="project" value="UniProtKB-KW"/>
</dbReference>
<dbReference type="GO" id="GO:0005840">
    <property type="term" value="C:ribosome"/>
    <property type="evidence" value="ECO:0007669"/>
    <property type="project" value="UniProtKB-KW"/>
</dbReference>
<dbReference type="GO" id="GO:0003735">
    <property type="term" value="F:structural constituent of ribosome"/>
    <property type="evidence" value="ECO:0007669"/>
    <property type="project" value="InterPro"/>
</dbReference>
<dbReference type="GO" id="GO:0006412">
    <property type="term" value="P:translation"/>
    <property type="evidence" value="ECO:0007669"/>
    <property type="project" value="UniProtKB-UniRule"/>
</dbReference>
<dbReference type="FunFam" id="2.30.30.70:FF:000001">
    <property type="entry name" value="60S ribosomal protein L21"/>
    <property type="match status" value="1"/>
</dbReference>
<dbReference type="Gene3D" id="2.30.30.70">
    <property type="entry name" value="Ribosomal protein L21"/>
    <property type="match status" value="1"/>
</dbReference>
<dbReference type="HAMAP" id="MF_00369">
    <property type="entry name" value="Ribosomal_eL21"/>
    <property type="match status" value="1"/>
</dbReference>
<dbReference type="InterPro" id="IPR001147">
    <property type="entry name" value="Ribosomal_eL21"/>
</dbReference>
<dbReference type="InterPro" id="IPR022856">
    <property type="entry name" value="Ribosomal_eL21_arc"/>
</dbReference>
<dbReference type="InterPro" id="IPR018259">
    <property type="entry name" value="Ribosomal_eL21_CS"/>
</dbReference>
<dbReference type="InterPro" id="IPR036948">
    <property type="entry name" value="Ribosomal_eL21_sf"/>
</dbReference>
<dbReference type="InterPro" id="IPR008991">
    <property type="entry name" value="Translation_prot_SH3-like_sf"/>
</dbReference>
<dbReference type="NCBIfam" id="NF003303">
    <property type="entry name" value="PRK04306.1"/>
    <property type="match status" value="1"/>
</dbReference>
<dbReference type="PANTHER" id="PTHR20981">
    <property type="entry name" value="60S RIBOSOMAL PROTEIN L21"/>
    <property type="match status" value="1"/>
</dbReference>
<dbReference type="Pfam" id="PF01157">
    <property type="entry name" value="Ribosomal_L21e"/>
    <property type="match status" value="1"/>
</dbReference>
<dbReference type="SUPFAM" id="SSF50104">
    <property type="entry name" value="Translation proteins SH3-like domain"/>
    <property type="match status" value="1"/>
</dbReference>
<dbReference type="PROSITE" id="PS01171">
    <property type="entry name" value="RIBOSOMAL_L21E"/>
    <property type="match status" value="1"/>
</dbReference>
<feature type="chain" id="PRO_1000205579" description="Large ribosomal subunit protein eL21">
    <location>
        <begin position="1"/>
        <end position="98"/>
    </location>
</feature>
<feature type="region of interest" description="Disordered" evidence="2">
    <location>
        <begin position="1"/>
        <end position="27"/>
    </location>
</feature>
<feature type="compositionally biased region" description="Basic residues" evidence="2">
    <location>
        <begin position="1"/>
        <end position="24"/>
    </location>
</feature>
<protein>
    <recommendedName>
        <fullName evidence="1">Large ribosomal subunit protein eL21</fullName>
    </recommendedName>
    <alternativeName>
        <fullName evidence="3">50S ribosomal protein L21e</fullName>
    </alternativeName>
</protein>
<comment type="similarity">
    <text evidence="1">Belongs to the eukaryotic ribosomal protein eL21 family.</text>
</comment>
<keyword id="KW-1185">Reference proteome</keyword>
<keyword id="KW-0687">Ribonucleoprotein</keyword>
<keyword id="KW-0689">Ribosomal protein</keyword>
<name>RL21_THEGJ</name>
<sequence>MVKKAHSFRRKTRGKLSKHPRRRGLPPLTRFLQEFEVGQKVHIVIEPSYHRGMPDPRFHGRTGTVVGKRGDAYIVEIKDGGKVKTFFIHPVHLRPQKG</sequence>
<accession>C5A597</accession>
<proteinExistence type="inferred from homology"/>
<gene>
    <name evidence="1" type="primary">rpl21e</name>
    <name type="ordered locus">TGAM_0907</name>
</gene>
<evidence type="ECO:0000255" key="1">
    <source>
        <dbReference type="HAMAP-Rule" id="MF_00369"/>
    </source>
</evidence>
<evidence type="ECO:0000256" key="2">
    <source>
        <dbReference type="SAM" id="MobiDB-lite"/>
    </source>
</evidence>
<evidence type="ECO:0000305" key="3"/>
<organism>
    <name type="scientific">Thermococcus gammatolerans (strain DSM 15229 / JCM 11827 / EJ3)</name>
    <dbReference type="NCBI Taxonomy" id="593117"/>
    <lineage>
        <taxon>Archaea</taxon>
        <taxon>Methanobacteriati</taxon>
        <taxon>Methanobacteriota</taxon>
        <taxon>Thermococci</taxon>
        <taxon>Thermococcales</taxon>
        <taxon>Thermococcaceae</taxon>
        <taxon>Thermococcus</taxon>
    </lineage>
</organism>
<reference key="1">
    <citation type="journal article" date="2007" name="Genome Biol.">
        <title>Genome analysis and genome-wide proteomics of Thermococcus gammatolerans, the most radioresistant organism known amongst the Archaea.</title>
        <authorList>
            <person name="Zivanovic Y."/>
            <person name="Armengaud J."/>
            <person name="Lagorce A."/>
            <person name="Leplat C."/>
            <person name="Guerin P."/>
            <person name="Dutertre M."/>
            <person name="Anthouard V."/>
            <person name="Forterre P."/>
            <person name="Wincker P."/>
            <person name="Confalonieri F."/>
        </authorList>
    </citation>
    <scope>NUCLEOTIDE SEQUENCE [LARGE SCALE GENOMIC DNA]</scope>
    <source>
        <strain>DSM 15229 / JCM 11827 / EJ3</strain>
    </source>
</reference>